<reference key="1">
    <citation type="journal article" date="2008" name="FEMS Yeast Res.">
        <title>Comparative genome analysis of a Saccharomyces cerevisiae wine strain.</title>
        <authorList>
            <person name="Borneman A.R."/>
            <person name="Forgan A.H."/>
            <person name="Pretorius I.S."/>
            <person name="Chambers P.J."/>
        </authorList>
    </citation>
    <scope>NUCLEOTIDE SEQUENCE [LARGE SCALE GENOMIC DNA]</scope>
    <source>
        <strain>AWRI1631</strain>
    </source>
</reference>
<comment type="subcellular location">
    <subcellularLocation>
        <location>Mitochondrion</location>
    </subcellularLocation>
    <subcellularLocation>
        <location evidence="1">Membrane</location>
        <topology evidence="1">Single-pass membrane protein</topology>
    </subcellularLocation>
</comment>
<comment type="similarity">
    <text evidence="4">Belongs to the LCL3 family.</text>
</comment>
<sequence>MREGDSNSKKSADVAVLSITLTGSTLTLIYTYKRYLTQFKRTNDIPRRIFRKHWLYGKVTSVGDGDNFHFFHMPGGIRGGWGWLRPVPQMIKNDSTAEKLVGDSRNMRFFNFNWITHGRSTKSKIQKAKSQFLKLNVPYKNRKNLPTIPIRLCGIDAPERAHFGNPAQPFGNEALIWLQNRILGKKVWVKPLSIDQYNRCVARVSYWDWFGGWKDLSLEMLKDGLAVVYEGKVNTEFDDREDKYRYYEFLARSRKKGLWIQNKFETPGEYKKRI</sequence>
<organism>
    <name type="scientific">Saccharomyces cerevisiae (strain AWRI1631)</name>
    <name type="common">Baker's yeast</name>
    <dbReference type="NCBI Taxonomy" id="545124"/>
    <lineage>
        <taxon>Eukaryota</taxon>
        <taxon>Fungi</taxon>
        <taxon>Dikarya</taxon>
        <taxon>Ascomycota</taxon>
        <taxon>Saccharomycotina</taxon>
        <taxon>Saccharomycetes</taxon>
        <taxon>Saccharomycetales</taxon>
        <taxon>Saccharomycetaceae</taxon>
        <taxon>Saccharomyces</taxon>
    </lineage>
</organism>
<keyword id="KW-0106">Calcium</keyword>
<keyword id="KW-0255">Endonuclease</keyword>
<keyword id="KW-0378">Hydrolase</keyword>
<keyword id="KW-0472">Membrane</keyword>
<keyword id="KW-0479">Metal-binding</keyword>
<keyword id="KW-0496">Mitochondrion</keyword>
<keyword id="KW-0540">Nuclease</keyword>
<keyword id="KW-0812">Transmembrane</keyword>
<keyword id="KW-1133">Transmembrane helix</keyword>
<protein>
    <recommendedName>
        <fullName>Probable endonuclease LCL3</fullName>
        <ecNumber>3.1.-.-</ecNumber>
    </recommendedName>
</protein>
<dbReference type="EC" id="3.1.-.-"/>
<dbReference type="EMBL" id="ABSV01000881">
    <property type="protein sequence ID" value="EDZ72201.1"/>
    <property type="molecule type" value="Genomic_DNA"/>
</dbReference>
<dbReference type="OrthoDB" id="16780at4893"/>
<dbReference type="Proteomes" id="UP000008988">
    <property type="component" value="Unassembled WGS sequence"/>
</dbReference>
<dbReference type="GO" id="GO:0016020">
    <property type="term" value="C:membrane"/>
    <property type="evidence" value="ECO:0007669"/>
    <property type="project" value="UniProtKB-SubCell"/>
</dbReference>
<dbReference type="GO" id="GO:0005739">
    <property type="term" value="C:mitochondrion"/>
    <property type="evidence" value="ECO:0007669"/>
    <property type="project" value="UniProtKB-SubCell"/>
</dbReference>
<dbReference type="GO" id="GO:0004519">
    <property type="term" value="F:endonuclease activity"/>
    <property type="evidence" value="ECO:0007669"/>
    <property type="project" value="UniProtKB-KW"/>
</dbReference>
<dbReference type="GO" id="GO:0046872">
    <property type="term" value="F:metal ion binding"/>
    <property type="evidence" value="ECO:0007669"/>
    <property type="project" value="UniProtKB-KW"/>
</dbReference>
<dbReference type="Gene3D" id="2.40.50.90">
    <property type="match status" value="1"/>
</dbReference>
<dbReference type="InterPro" id="IPR035437">
    <property type="entry name" value="SNase_OB-fold_sf"/>
</dbReference>
<dbReference type="InterPro" id="IPR016071">
    <property type="entry name" value="Staphylococal_nuclease_OB-fold"/>
</dbReference>
<dbReference type="PANTHER" id="PTHR12302">
    <property type="entry name" value="EBNA2 BINDING PROTEIN P100"/>
    <property type="match status" value="1"/>
</dbReference>
<dbReference type="PANTHER" id="PTHR12302:SF3">
    <property type="entry name" value="SERINE_THREONINE-PROTEIN KINASE 31"/>
    <property type="match status" value="1"/>
</dbReference>
<dbReference type="Pfam" id="PF00565">
    <property type="entry name" value="SNase"/>
    <property type="match status" value="1"/>
</dbReference>
<dbReference type="SMART" id="SM00318">
    <property type="entry name" value="SNc"/>
    <property type="match status" value="1"/>
</dbReference>
<dbReference type="SUPFAM" id="SSF50199">
    <property type="entry name" value="Staphylococcal nuclease"/>
    <property type="match status" value="1"/>
</dbReference>
<dbReference type="PROSITE" id="PS50830">
    <property type="entry name" value="TNASE_3"/>
    <property type="match status" value="1"/>
</dbReference>
<proteinExistence type="inferred from homology"/>
<feature type="chain" id="PRO_0000408690" description="Probable endonuclease LCL3">
    <location>
        <begin position="1"/>
        <end position="274"/>
    </location>
</feature>
<feature type="transmembrane region" description="Helical" evidence="2">
    <location>
        <begin position="15"/>
        <end position="32"/>
    </location>
</feature>
<feature type="domain" description="TNase-like" evidence="3">
    <location>
        <begin position="53"/>
        <end position="261"/>
    </location>
</feature>
<feature type="active site" evidence="3">
    <location>
        <position position="151"/>
    </location>
</feature>
<feature type="active site" evidence="3">
    <location>
        <position position="159"/>
    </location>
</feature>
<feature type="active site" evidence="3">
    <location>
        <position position="199"/>
    </location>
</feature>
<feature type="binding site" evidence="3">
    <location>
        <position position="156"/>
    </location>
    <ligand>
        <name>Ca(2+)</name>
        <dbReference type="ChEBI" id="CHEBI:29108"/>
    </ligand>
</feature>
<name>LCL3_YEAS6</name>
<gene>
    <name type="primary">LCL3</name>
    <name type="ORF">AWRI1631_71660</name>
</gene>
<evidence type="ECO:0000250" key="1"/>
<evidence type="ECO:0000255" key="2"/>
<evidence type="ECO:0000255" key="3">
    <source>
        <dbReference type="PROSITE-ProRule" id="PRU00272"/>
    </source>
</evidence>
<evidence type="ECO:0000305" key="4"/>
<accession>B5VIN9</accession>